<comment type="function">
    <text evidence="2">Dephosphorylates nucleoside monophosphates such as the 5' and 2'(3')-phosphates of deoxyribonucleotides in vitro. Also catalyzes the dephosphorylation of coenzyme A (CoA), pyridoxal-5'-phosphate (PLP), riboflavine-5-phosphate (FMN) and nicotinamide adenine dinucleotide phosphate (NADP) in vitro.</text>
</comment>
<comment type="cofactor">
    <cofactor evidence="2">
        <name>Mg(2+)</name>
        <dbReference type="ChEBI" id="CHEBI:18420"/>
    </cofactor>
</comment>
<comment type="similarity">
    <text evidence="3">Belongs to the 5'(3')-deoxyribonucleotidase family.</text>
</comment>
<dbReference type="EC" id="3.1.3.-" evidence="4"/>
<dbReference type="EMBL" id="AL009126">
    <property type="protein sequence ID" value="CAB13919.1"/>
    <property type="molecule type" value="Genomic_DNA"/>
</dbReference>
<dbReference type="PIR" id="T12904">
    <property type="entry name" value="T12904"/>
</dbReference>
<dbReference type="RefSeq" id="NP_389909.1">
    <property type="nucleotide sequence ID" value="NC_000964.3"/>
</dbReference>
<dbReference type="RefSeq" id="WP_004399368.1">
    <property type="nucleotide sequence ID" value="NZ_OZ025638.1"/>
</dbReference>
<dbReference type="SMR" id="P68522"/>
<dbReference type="FunCoup" id="P68522">
    <property type="interactions" value="56"/>
</dbReference>
<dbReference type="STRING" id="224308.BSU20270"/>
<dbReference type="PaxDb" id="224308-BSU20270"/>
<dbReference type="DNASU" id="939520"/>
<dbReference type="EnsemblBacteria" id="CAB13919">
    <property type="protein sequence ID" value="CAB13919"/>
    <property type="gene ID" value="BSU_20270"/>
</dbReference>
<dbReference type="GeneID" id="939520"/>
<dbReference type="KEGG" id="bsu:BSU20270"/>
<dbReference type="PATRIC" id="fig|224308.179.peg.2217"/>
<dbReference type="eggNOG" id="COG4502">
    <property type="taxonomic scope" value="Bacteria"/>
</dbReference>
<dbReference type="InParanoid" id="P68522"/>
<dbReference type="OrthoDB" id="278110at2"/>
<dbReference type="BioCyc" id="BSUB:BSU20270-MONOMER"/>
<dbReference type="Proteomes" id="UP000001570">
    <property type="component" value="Chromosome"/>
</dbReference>
<dbReference type="GO" id="GO:0008253">
    <property type="term" value="F:5'-nucleotidase activity"/>
    <property type="evidence" value="ECO:0000318"/>
    <property type="project" value="GO_Central"/>
</dbReference>
<dbReference type="GO" id="GO:0046872">
    <property type="term" value="F:metal ion binding"/>
    <property type="evidence" value="ECO:0007669"/>
    <property type="project" value="UniProtKB-KW"/>
</dbReference>
<dbReference type="GO" id="GO:0009223">
    <property type="term" value="P:pyrimidine deoxyribonucleotide catabolic process"/>
    <property type="evidence" value="ECO:0000318"/>
    <property type="project" value="GO_Central"/>
</dbReference>
<dbReference type="CDD" id="cd02587">
    <property type="entry name" value="HAD_5-3dNT"/>
    <property type="match status" value="1"/>
</dbReference>
<dbReference type="Gene3D" id="1.10.40.40">
    <property type="entry name" value="Deoxyribonucleotidase, domain 2"/>
    <property type="match status" value="1"/>
</dbReference>
<dbReference type="Gene3D" id="3.40.50.1000">
    <property type="entry name" value="HAD superfamily/HAD-like"/>
    <property type="match status" value="1"/>
</dbReference>
<dbReference type="InterPro" id="IPR010708">
    <property type="entry name" value="5'(3')-deoxyribonucleotidase"/>
</dbReference>
<dbReference type="InterPro" id="IPR036412">
    <property type="entry name" value="HAD-like_sf"/>
</dbReference>
<dbReference type="InterPro" id="IPR023214">
    <property type="entry name" value="HAD_sf"/>
</dbReference>
<dbReference type="PANTHER" id="PTHR16504">
    <property type="entry name" value="5'(3')-DEOXYRIBONUCLEOTIDASE"/>
    <property type="match status" value="1"/>
</dbReference>
<dbReference type="PANTHER" id="PTHR16504:SF4">
    <property type="entry name" value="5'(3')-DEOXYRIBONUCLEOTIDASE"/>
    <property type="match status" value="1"/>
</dbReference>
<dbReference type="Pfam" id="PF06941">
    <property type="entry name" value="NT5C"/>
    <property type="match status" value="1"/>
</dbReference>
<dbReference type="SFLD" id="SFLDG01146">
    <property type="entry name" value="C1.2.2"/>
    <property type="match status" value="1"/>
</dbReference>
<dbReference type="SFLD" id="SFLDG01126">
    <property type="entry name" value="C1.2:_Nucleotidase_Like"/>
    <property type="match status" value="1"/>
</dbReference>
<dbReference type="SUPFAM" id="SSF56784">
    <property type="entry name" value="HAD-like"/>
    <property type="match status" value="1"/>
</dbReference>
<name>53DR_BACSU</name>
<keyword id="KW-0378">Hydrolase</keyword>
<keyword id="KW-0460">Magnesium</keyword>
<keyword id="KW-0479">Metal-binding</keyword>
<keyword id="KW-1185">Reference proteome</keyword>
<organism>
    <name type="scientific">Bacillus subtilis (strain 168)</name>
    <dbReference type="NCBI Taxonomy" id="224308"/>
    <lineage>
        <taxon>Bacteria</taxon>
        <taxon>Bacillati</taxon>
        <taxon>Bacillota</taxon>
        <taxon>Bacilli</taxon>
        <taxon>Bacillales</taxon>
        <taxon>Bacillaceae</taxon>
        <taxon>Bacillus</taxon>
    </lineage>
</organism>
<evidence type="ECO:0000250" key="1">
    <source>
        <dbReference type="UniProtKB" id="Q8CTG7"/>
    </source>
</evidence>
<evidence type="ECO:0000269" key="2">
    <source>
    </source>
</evidence>
<evidence type="ECO:0000305" key="3"/>
<evidence type="ECO:0000305" key="4">
    <source>
    </source>
</evidence>
<proteinExistence type="inferred from homology"/>
<protein>
    <recommendedName>
        <fullName evidence="4">5'(3')-deoxyribonucleotidase</fullName>
        <ecNumber evidence="4">3.1.3.-</ecNumber>
    </recommendedName>
    <alternativeName>
        <fullName>Putative SPbeta prophage-derived 5'(3')-deoxyribonucleotidase</fullName>
    </alternativeName>
</protein>
<feature type="chain" id="PRO_0000164373" description="5'(3')-deoxyribonucleotidase">
    <location>
        <begin position="1"/>
        <end position="172"/>
    </location>
</feature>
<feature type="active site" description="Nucleophile" evidence="3">
    <location>
        <position position="8"/>
    </location>
</feature>
<feature type="active site" description="Proton donor" evidence="3">
    <location>
        <position position="10"/>
    </location>
</feature>
<feature type="binding site" evidence="1">
    <location>
        <position position="8"/>
    </location>
    <ligand>
        <name>Mg(2+)</name>
        <dbReference type="ChEBI" id="CHEBI:18420"/>
    </ligand>
</feature>
<feature type="binding site" evidence="1">
    <location>
        <position position="10"/>
    </location>
    <ligand>
        <name>Mg(2+)</name>
        <dbReference type="ChEBI" id="CHEBI:18420"/>
    </ligand>
</feature>
<feature type="binding site" evidence="1">
    <location>
        <position position="132"/>
    </location>
    <ligand>
        <name>Mg(2+)</name>
        <dbReference type="ChEBI" id="CHEBI:18420"/>
    </ligand>
</feature>
<gene>
    <name type="primary">yorS</name>
    <name type="ordered locus">BSU20270</name>
</gene>
<accession>P68522</accession>
<accession>O31895</accession>
<accession>O64153</accession>
<sequence>MKKVIAIDMDQVLADLLSDWVAYINTYDDPFLKEKDILCWDIKKYTNTNNNVYRHLDYDLFRNLNVIEGSQRVTKELMKKYEVYVVTTATNHPDSLKAKLEWLTEYFPFIPHSNVVLCGNKNIIKADIMIDDGIHNLESFEGMKILFDAPHNRNENRFIRVMNWEEIERKLL</sequence>
<reference key="1">
    <citation type="journal article" date="1997" name="Nature">
        <title>The complete genome sequence of the Gram-positive bacterium Bacillus subtilis.</title>
        <authorList>
            <person name="Kunst F."/>
            <person name="Ogasawara N."/>
            <person name="Moszer I."/>
            <person name="Albertini A.M."/>
            <person name="Alloni G."/>
            <person name="Azevedo V."/>
            <person name="Bertero M.G."/>
            <person name="Bessieres P."/>
            <person name="Bolotin A."/>
            <person name="Borchert S."/>
            <person name="Borriss R."/>
            <person name="Boursier L."/>
            <person name="Brans A."/>
            <person name="Braun M."/>
            <person name="Brignell S.C."/>
            <person name="Bron S."/>
            <person name="Brouillet S."/>
            <person name="Bruschi C.V."/>
            <person name="Caldwell B."/>
            <person name="Capuano V."/>
            <person name="Carter N.M."/>
            <person name="Choi S.-K."/>
            <person name="Codani J.-J."/>
            <person name="Connerton I.F."/>
            <person name="Cummings N.J."/>
            <person name="Daniel R.A."/>
            <person name="Denizot F."/>
            <person name="Devine K.M."/>
            <person name="Duesterhoeft A."/>
            <person name="Ehrlich S.D."/>
            <person name="Emmerson P.T."/>
            <person name="Entian K.-D."/>
            <person name="Errington J."/>
            <person name="Fabret C."/>
            <person name="Ferrari E."/>
            <person name="Foulger D."/>
            <person name="Fritz C."/>
            <person name="Fujita M."/>
            <person name="Fujita Y."/>
            <person name="Fuma S."/>
            <person name="Galizzi A."/>
            <person name="Galleron N."/>
            <person name="Ghim S.-Y."/>
            <person name="Glaser P."/>
            <person name="Goffeau A."/>
            <person name="Golightly E.J."/>
            <person name="Grandi G."/>
            <person name="Guiseppi G."/>
            <person name="Guy B.J."/>
            <person name="Haga K."/>
            <person name="Haiech J."/>
            <person name="Harwood C.R."/>
            <person name="Henaut A."/>
            <person name="Hilbert H."/>
            <person name="Holsappel S."/>
            <person name="Hosono S."/>
            <person name="Hullo M.-F."/>
            <person name="Itaya M."/>
            <person name="Jones L.-M."/>
            <person name="Joris B."/>
            <person name="Karamata D."/>
            <person name="Kasahara Y."/>
            <person name="Klaerr-Blanchard M."/>
            <person name="Klein C."/>
            <person name="Kobayashi Y."/>
            <person name="Koetter P."/>
            <person name="Koningstein G."/>
            <person name="Krogh S."/>
            <person name="Kumano M."/>
            <person name="Kurita K."/>
            <person name="Lapidus A."/>
            <person name="Lardinois S."/>
            <person name="Lauber J."/>
            <person name="Lazarevic V."/>
            <person name="Lee S.-M."/>
            <person name="Levine A."/>
            <person name="Liu H."/>
            <person name="Masuda S."/>
            <person name="Mauel C."/>
            <person name="Medigue C."/>
            <person name="Medina N."/>
            <person name="Mellado R.P."/>
            <person name="Mizuno M."/>
            <person name="Moestl D."/>
            <person name="Nakai S."/>
            <person name="Noback M."/>
            <person name="Noone D."/>
            <person name="O'Reilly M."/>
            <person name="Ogawa K."/>
            <person name="Ogiwara A."/>
            <person name="Oudega B."/>
            <person name="Park S.-H."/>
            <person name="Parro V."/>
            <person name="Pohl T.M."/>
            <person name="Portetelle D."/>
            <person name="Porwollik S."/>
            <person name="Prescott A.M."/>
            <person name="Presecan E."/>
            <person name="Pujic P."/>
            <person name="Purnelle B."/>
            <person name="Rapoport G."/>
            <person name="Rey M."/>
            <person name="Reynolds S."/>
            <person name="Rieger M."/>
            <person name="Rivolta C."/>
            <person name="Rocha E."/>
            <person name="Roche B."/>
            <person name="Rose M."/>
            <person name="Sadaie Y."/>
            <person name="Sato T."/>
            <person name="Scanlan E."/>
            <person name="Schleich S."/>
            <person name="Schroeter R."/>
            <person name="Scoffone F."/>
            <person name="Sekiguchi J."/>
            <person name="Sekowska A."/>
            <person name="Seror S.J."/>
            <person name="Serror P."/>
            <person name="Shin B.-S."/>
            <person name="Soldo B."/>
            <person name="Sorokin A."/>
            <person name="Tacconi E."/>
            <person name="Takagi T."/>
            <person name="Takahashi H."/>
            <person name="Takemaru K."/>
            <person name="Takeuchi M."/>
            <person name="Tamakoshi A."/>
            <person name="Tanaka T."/>
            <person name="Terpstra P."/>
            <person name="Tognoni A."/>
            <person name="Tosato V."/>
            <person name="Uchiyama S."/>
            <person name="Vandenbol M."/>
            <person name="Vannier F."/>
            <person name="Vassarotti A."/>
            <person name="Viari A."/>
            <person name="Wambutt R."/>
            <person name="Wedler E."/>
            <person name="Wedler H."/>
            <person name="Weitzenegger T."/>
            <person name="Winters P."/>
            <person name="Wipat A."/>
            <person name="Yamamoto H."/>
            <person name="Yamane K."/>
            <person name="Yasumoto K."/>
            <person name="Yata K."/>
            <person name="Yoshida K."/>
            <person name="Yoshikawa H.-F."/>
            <person name="Zumstein E."/>
            <person name="Yoshikawa H."/>
            <person name="Danchin A."/>
        </authorList>
    </citation>
    <scope>NUCLEOTIDE SEQUENCE [LARGE SCALE GENOMIC DNA]</scope>
    <source>
        <strain>168</strain>
    </source>
</reference>
<reference key="2">
    <citation type="journal article" date="2015" name="Proc. Natl. Acad. Sci. U.S.A.">
        <title>Panoramic view of a superfamily of phosphatases through substrate profiling.</title>
        <authorList>
            <person name="Huang H."/>
            <person name="Pandya C."/>
            <person name="Liu C."/>
            <person name="Al-Obaidi N.F."/>
            <person name="Wang M."/>
            <person name="Zheng L."/>
            <person name="Toews Keating S."/>
            <person name="Aono M."/>
            <person name="Love J.D."/>
            <person name="Evans B."/>
            <person name="Seidel R.D."/>
            <person name="Hillerich B.S."/>
            <person name="Garforth S.J."/>
            <person name="Almo S.C."/>
            <person name="Mariano P.S."/>
            <person name="Dunaway-Mariano D."/>
            <person name="Allen K.N."/>
            <person name="Farelli J.D."/>
        </authorList>
    </citation>
    <scope>FUNCTION</scope>
    <scope>COFACTOR</scope>
</reference>